<comment type="function">
    <text evidence="1">Catalyzes the condensation of carbamoyl phosphate and aspartate to form carbamoyl aspartate and inorganic phosphate, the committed step in the de novo pyrimidine nucleotide biosynthesis pathway.</text>
</comment>
<comment type="catalytic activity">
    <reaction evidence="1">
        <text>carbamoyl phosphate + L-aspartate = N-carbamoyl-L-aspartate + phosphate + H(+)</text>
        <dbReference type="Rhea" id="RHEA:20013"/>
        <dbReference type="ChEBI" id="CHEBI:15378"/>
        <dbReference type="ChEBI" id="CHEBI:29991"/>
        <dbReference type="ChEBI" id="CHEBI:32814"/>
        <dbReference type="ChEBI" id="CHEBI:43474"/>
        <dbReference type="ChEBI" id="CHEBI:58228"/>
        <dbReference type="EC" id="2.1.3.2"/>
    </reaction>
</comment>
<comment type="pathway">
    <text evidence="1">Pyrimidine metabolism; UMP biosynthesis via de novo pathway; (S)-dihydroorotate from bicarbonate: step 2/3.</text>
</comment>
<comment type="subunit">
    <text evidence="1">Heterododecamer (2C3:3R2) of six catalytic PyrB chains organized as two trimers (C3), and six regulatory PyrI chains organized as three dimers (R2).</text>
</comment>
<comment type="similarity">
    <text evidence="1">Belongs to the aspartate/ornithine carbamoyltransferase superfamily. ATCase family.</text>
</comment>
<accession>Q1QL23</accession>
<reference key="1">
    <citation type="submission" date="2006-03" db="EMBL/GenBank/DDBJ databases">
        <title>Complete sequence of chromosome of Nitrobacter hamburgensis X14.</title>
        <authorList>
            <consortium name="US DOE Joint Genome Institute"/>
            <person name="Copeland A."/>
            <person name="Lucas S."/>
            <person name="Lapidus A."/>
            <person name="Barry K."/>
            <person name="Detter J.C."/>
            <person name="Glavina del Rio T."/>
            <person name="Hammon N."/>
            <person name="Israni S."/>
            <person name="Dalin E."/>
            <person name="Tice H."/>
            <person name="Pitluck S."/>
            <person name="Chain P."/>
            <person name="Malfatti S."/>
            <person name="Shin M."/>
            <person name="Vergez L."/>
            <person name="Schmutz J."/>
            <person name="Larimer F."/>
            <person name="Land M."/>
            <person name="Hauser L."/>
            <person name="Kyrpides N."/>
            <person name="Ivanova N."/>
            <person name="Ward B."/>
            <person name="Arp D."/>
            <person name="Klotz M."/>
            <person name="Stein L."/>
            <person name="O'Mullan G."/>
            <person name="Starkenburg S."/>
            <person name="Sayavedra L."/>
            <person name="Poret-Peterson A.T."/>
            <person name="Gentry M.E."/>
            <person name="Bruce D."/>
            <person name="Richardson P."/>
        </authorList>
    </citation>
    <scope>NUCLEOTIDE SEQUENCE [LARGE SCALE GENOMIC DNA]</scope>
    <source>
        <strain>DSM 10229 / NCIMB 13809 / X14</strain>
    </source>
</reference>
<proteinExistence type="inferred from homology"/>
<name>PYRB_NITHX</name>
<gene>
    <name evidence="1" type="primary">pyrB</name>
    <name type="ordered locus">Nham_2282</name>
</gene>
<keyword id="KW-0665">Pyrimidine biosynthesis</keyword>
<keyword id="KW-1185">Reference proteome</keyword>
<keyword id="KW-0808">Transferase</keyword>
<evidence type="ECO:0000255" key="1">
    <source>
        <dbReference type="HAMAP-Rule" id="MF_00001"/>
    </source>
</evidence>
<protein>
    <recommendedName>
        <fullName evidence="1">Aspartate carbamoyltransferase catalytic subunit</fullName>
        <ecNumber evidence="1">2.1.3.2</ecNumber>
    </recommendedName>
    <alternativeName>
        <fullName evidence="1">Aspartate transcarbamylase</fullName>
        <shortName evidence="1">ATCase</shortName>
    </alternativeName>
</protein>
<dbReference type="EC" id="2.1.3.2" evidence="1"/>
<dbReference type="EMBL" id="CP000319">
    <property type="protein sequence ID" value="ABE63074.1"/>
    <property type="molecule type" value="Genomic_DNA"/>
</dbReference>
<dbReference type="RefSeq" id="WP_011510751.1">
    <property type="nucleotide sequence ID" value="NC_007964.1"/>
</dbReference>
<dbReference type="SMR" id="Q1QL23"/>
<dbReference type="STRING" id="323097.Nham_2282"/>
<dbReference type="KEGG" id="nha:Nham_2282"/>
<dbReference type="eggNOG" id="COG0540">
    <property type="taxonomic scope" value="Bacteria"/>
</dbReference>
<dbReference type="HOGENOM" id="CLU_043846_2_0_5"/>
<dbReference type="OrthoDB" id="9774690at2"/>
<dbReference type="UniPathway" id="UPA00070">
    <property type="reaction ID" value="UER00116"/>
</dbReference>
<dbReference type="Proteomes" id="UP000001953">
    <property type="component" value="Chromosome"/>
</dbReference>
<dbReference type="GO" id="GO:0005829">
    <property type="term" value="C:cytosol"/>
    <property type="evidence" value="ECO:0007669"/>
    <property type="project" value="TreeGrafter"/>
</dbReference>
<dbReference type="GO" id="GO:0016597">
    <property type="term" value="F:amino acid binding"/>
    <property type="evidence" value="ECO:0007669"/>
    <property type="project" value="InterPro"/>
</dbReference>
<dbReference type="GO" id="GO:0004070">
    <property type="term" value="F:aspartate carbamoyltransferase activity"/>
    <property type="evidence" value="ECO:0007669"/>
    <property type="project" value="UniProtKB-UniRule"/>
</dbReference>
<dbReference type="GO" id="GO:0006207">
    <property type="term" value="P:'de novo' pyrimidine nucleobase biosynthetic process"/>
    <property type="evidence" value="ECO:0007669"/>
    <property type="project" value="InterPro"/>
</dbReference>
<dbReference type="GO" id="GO:0044205">
    <property type="term" value="P:'de novo' UMP biosynthetic process"/>
    <property type="evidence" value="ECO:0007669"/>
    <property type="project" value="UniProtKB-UniRule"/>
</dbReference>
<dbReference type="GO" id="GO:0006520">
    <property type="term" value="P:amino acid metabolic process"/>
    <property type="evidence" value="ECO:0007669"/>
    <property type="project" value="InterPro"/>
</dbReference>
<dbReference type="FunFam" id="3.40.50.1370:FF:000007">
    <property type="entry name" value="Aspartate carbamoyltransferase"/>
    <property type="match status" value="1"/>
</dbReference>
<dbReference type="Gene3D" id="3.40.50.1370">
    <property type="entry name" value="Aspartate/ornithine carbamoyltransferase"/>
    <property type="match status" value="2"/>
</dbReference>
<dbReference type="HAMAP" id="MF_00001">
    <property type="entry name" value="Asp_carb_tr"/>
    <property type="match status" value="1"/>
</dbReference>
<dbReference type="InterPro" id="IPR006132">
    <property type="entry name" value="Asp/Orn_carbamoyltranf_P-bd"/>
</dbReference>
<dbReference type="InterPro" id="IPR006130">
    <property type="entry name" value="Asp/Orn_carbamoylTrfase"/>
</dbReference>
<dbReference type="InterPro" id="IPR036901">
    <property type="entry name" value="Asp/Orn_carbamoylTrfase_sf"/>
</dbReference>
<dbReference type="InterPro" id="IPR002082">
    <property type="entry name" value="Asp_carbamoyltransf"/>
</dbReference>
<dbReference type="InterPro" id="IPR006131">
    <property type="entry name" value="Asp_carbamoyltransf_Asp/Orn-bd"/>
</dbReference>
<dbReference type="NCBIfam" id="TIGR00670">
    <property type="entry name" value="asp_carb_tr"/>
    <property type="match status" value="1"/>
</dbReference>
<dbReference type="NCBIfam" id="NF002032">
    <property type="entry name" value="PRK00856.1"/>
    <property type="match status" value="1"/>
</dbReference>
<dbReference type="PANTHER" id="PTHR45753:SF6">
    <property type="entry name" value="ASPARTATE CARBAMOYLTRANSFERASE"/>
    <property type="match status" value="1"/>
</dbReference>
<dbReference type="PANTHER" id="PTHR45753">
    <property type="entry name" value="ORNITHINE CARBAMOYLTRANSFERASE, MITOCHONDRIAL"/>
    <property type="match status" value="1"/>
</dbReference>
<dbReference type="Pfam" id="PF00185">
    <property type="entry name" value="OTCace"/>
    <property type="match status" value="1"/>
</dbReference>
<dbReference type="Pfam" id="PF02729">
    <property type="entry name" value="OTCace_N"/>
    <property type="match status" value="1"/>
</dbReference>
<dbReference type="PRINTS" id="PR00100">
    <property type="entry name" value="AOTCASE"/>
</dbReference>
<dbReference type="PRINTS" id="PR00101">
    <property type="entry name" value="ATCASE"/>
</dbReference>
<dbReference type="SUPFAM" id="SSF53671">
    <property type="entry name" value="Aspartate/ornithine carbamoyltransferase"/>
    <property type="match status" value="1"/>
</dbReference>
<dbReference type="PROSITE" id="PS00097">
    <property type="entry name" value="CARBAMOYLTRANSFERASE"/>
    <property type="match status" value="1"/>
</dbReference>
<feature type="chain" id="PRO_0000301598" description="Aspartate carbamoyltransferase catalytic subunit">
    <location>
        <begin position="1"/>
        <end position="317"/>
    </location>
</feature>
<feature type="binding site" evidence="1">
    <location>
        <position position="66"/>
    </location>
    <ligand>
        <name>carbamoyl phosphate</name>
        <dbReference type="ChEBI" id="CHEBI:58228"/>
    </ligand>
</feature>
<feature type="binding site" evidence="1">
    <location>
        <position position="67"/>
    </location>
    <ligand>
        <name>carbamoyl phosphate</name>
        <dbReference type="ChEBI" id="CHEBI:58228"/>
    </ligand>
</feature>
<feature type="binding site" evidence="1">
    <location>
        <position position="94"/>
    </location>
    <ligand>
        <name>L-aspartate</name>
        <dbReference type="ChEBI" id="CHEBI:29991"/>
    </ligand>
</feature>
<feature type="binding site" evidence="1">
    <location>
        <position position="116"/>
    </location>
    <ligand>
        <name>carbamoyl phosphate</name>
        <dbReference type="ChEBI" id="CHEBI:58228"/>
    </ligand>
</feature>
<feature type="binding site" evidence="1">
    <location>
        <position position="144"/>
    </location>
    <ligand>
        <name>carbamoyl phosphate</name>
        <dbReference type="ChEBI" id="CHEBI:58228"/>
    </ligand>
</feature>
<feature type="binding site" evidence="1">
    <location>
        <position position="147"/>
    </location>
    <ligand>
        <name>carbamoyl phosphate</name>
        <dbReference type="ChEBI" id="CHEBI:58228"/>
    </ligand>
</feature>
<feature type="binding site" evidence="1">
    <location>
        <position position="177"/>
    </location>
    <ligand>
        <name>L-aspartate</name>
        <dbReference type="ChEBI" id="CHEBI:29991"/>
    </ligand>
</feature>
<feature type="binding site" evidence="1">
    <location>
        <position position="231"/>
    </location>
    <ligand>
        <name>L-aspartate</name>
        <dbReference type="ChEBI" id="CHEBI:29991"/>
    </ligand>
</feature>
<feature type="binding site" evidence="1">
    <location>
        <position position="272"/>
    </location>
    <ligand>
        <name>carbamoyl phosphate</name>
        <dbReference type="ChEBI" id="CHEBI:58228"/>
    </ligand>
</feature>
<feature type="binding site" evidence="1">
    <location>
        <position position="273"/>
    </location>
    <ligand>
        <name>carbamoyl phosphate</name>
        <dbReference type="ChEBI" id="CHEBI:58228"/>
    </ligand>
</feature>
<organism>
    <name type="scientific">Nitrobacter hamburgensis (strain DSM 10229 / NCIMB 13809 / X14)</name>
    <dbReference type="NCBI Taxonomy" id="323097"/>
    <lineage>
        <taxon>Bacteria</taxon>
        <taxon>Pseudomonadati</taxon>
        <taxon>Pseudomonadota</taxon>
        <taxon>Alphaproteobacteria</taxon>
        <taxon>Hyphomicrobiales</taxon>
        <taxon>Nitrobacteraceae</taxon>
        <taxon>Nitrobacter</taxon>
    </lineage>
</organism>
<sequence>MTSSTKSSFVLGHRHLLGIEGLSVADITGLLDLSEEYVELNRQVDKKRTSLRGRTQINLFFEASTRTQSSFEIAGKRLGADVMNMSVSSMSTRKGETLVDTAMTLNAMHPDILVMRHSASGAVELLARKVDGSVINAGDGAHEHPTQALLDALTIRRNKGRLDGLLVAICGDVLHSRVARSNIILLNAMGARVRVVAPSTLLPPGIERMGVEVARDMREGLDGADIVMMLRLQRERMSGSFVPSVSEYFHYFGLDQKKLAYAKPDALVMHPGPMNRGVEIDSIVADGAQSLIREQVEMGVAVRMAVLEALARNLPNA</sequence>